<gene>
    <name evidence="1" type="primary">groES</name>
    <name evidence="1" type="synonym">groS</name>
    <name type="ordered locus">EFER_4194</name>
</gene>
<proteinExistence type="inferred from homology"/>
<dbReference type="EMBL" id="CU928158">
    <property type="protein sequence ID" value="CAQ91614.1"/>
    <property type="molecule type" value="Genomic_DNA"/>
</dbReference>
<dbReference type="RefSeq" id="WP_001026276.1">
    <property type="nucleotide sequence ID" value="NC_011740.1"/>
</dbReference>
<dbReference type="SMR" id="B7LLS4"/>
<dbReference type="KEGG" id="efe:EFER_4194"/>
<dbReference type="HOGENOM" id="CLU_132825_1_1_6"/>
<dbReference type="OrthoDB" id="9806791at2"/>
<dbReference type="Proteomes" id="UP000000745">
    <property type="component" value="Chromosome"/>
</dbReference>
<dbReference type="GO" id="GO:0005737">
    <property type="term" value="C:cytoplasm"/>
    <property type="evidence" value="ECO:0007669"/>
    <property type="project" value="UniProtKB-SubCell"/>
</dbReference>
<dbReference type="GO" id="GO:0005524">
    <property type="term" value="F:ATP binding"/>
    <property type="evidence" value="ECO:0007669"/>
    <property type="project" value="InterPro"/>
</dbReference>
<dbReference type="GO" id="GO:0046872">
    <property type="term" value="F:metal ion binding"/>
    <property type="evidence" value="ECO:0007669"/>
    <property type="project" value="TreeGrafter"/>
</dbReference>
<dbReference type="GO" id="GO:0044183">
    <property type="term" value="F:protein folding chaperone"/>
    <property type="evidence" value="ECO:0007669"/>
    <property type="project" value="InterPro"/>
</dbReference>
<dbReference type="GO" id="GO:0051087">
    <property type="term" value="F:protein-folding chaperone binding"/>
    <property type="evidence" value="ECO:0007669"/>
    <property type="project" value="TreeGrafter"/>
</dbReference>
<dbReference type="GO" id="GO:0051082">
    <property type="term" value="F:unfolded protein binding"/>
    <property type="evidence" value="ECO:0007669"/>
    <property type="project" value="TreeGrafter"/>
</dbReference>
<dbReference type="GO" id="GO:0051085">
    <property type="term" value="P:chaperone cofactor-dependent protein refolding"/>
    <property type="evidence" value="ECO:0007669"/>
    <property type="project" value="TreeGrafter"/>
</dbReference>
<dbReference type="CDD" id="cd00320">
    <property type="entry name" value="cpn10"/>
    <property type="match status" value="1"/>
</dbReference>
<dbReference type="FunFam" id="2.30.33.40:FF:000001">
    <property type="entry name" value="10 kDa chaperonin"/>
    <property type="match status" value="1"/>
</dbReference>
<dbReference type="Gene3D" id="2.30.33.40">
    <property type="entry name" value="GroES chaperonin"/>
    <property type="match status" value="1"/>
</dbReference>
<dbReference type="HAMAP" id="MF_00580">
    <property type="entry name" value="CH10"/>
    <property type="match status" value="1"/>
</dbReference>
<dbReference type="InterPro" id="IPR020818">
    <property type="entry name" value="Chaperonin_GroES"/>
</dbReference>
<dbReference type="InterPro" id="IPR037124">
    <property type="entry name" value="Chaperonin_GroES_sf"/>
</dbReference>
<dbReference type="InterPro" id="IPR018369">
    <property type="entry name" value="Chaprnonin_Cpn10_CS"/>
</dbReference>
<dbReference type="InterPro" id="IPR011032">
    <property type="entry name" value="GroES-like_sf"/>
</dbReference>
<dbReference type="NCBIfam" id="NF001526">
    <property type="entry name" value="PRK00364.1-1"/>
    <property type="match status" value="1"/>
</dbReference>
<dbReference type="NCBIfam" id="NF001527">
    <property type="entry name" value="PRK00364.1-2"/>
    <property type="match status" value="1"/>
</dbReference>
<dbReference type="NCBIfam" id="NF001531">
    <property type="entry name" value="PRK00364.2-2"/>
    <property type="match status" value="1"/>
</dbReference>
<dbReference type="PANTHER" id="PTHR10772">
    <property type="entry name" value="10 KDA HEAT SHOCK PROTEIN"/>
    <property type="match status" value="1"/>
</dbReference>
<dbReference type="PANTHER" id="PTHR10772:SF58">
    <property type="entry name" value="CO-CHAPERONIN GROES"/>
    <property type="match status" value="1"/>
</dbReference>
<dbReference type="Pfam" id="PF00166">
    <property type="entry name" value="Cpn10"/>
    <property type="match status" value="1"/>
</dbReference>
<dbReference type="PRINTS" id="PR00297">
    <property type="entry name" value="CHAPERONIN10"/>
</dbReference>
<dbReference type="SMART" id="SM00883">
    <property type="entry name" value="Cpn10"/>
    <property type="match status" value="1"/>
</dbReference>
<dbReference type="SUPFAM" id="SSF50129">
    <property type="entry name" value="GroES-like"/>
    <property type="match status" value="1"/>
</dbReference>
<dbReference type="PROSITE" id="PS00681">
    <property type="entry name" value="CHAPERONINS_CPN10"/>
    <property type="match status" value="1"/>
</dbReference>
<protein>
    <recommendedName>
        <fullName evidence="1">Co-chaperonin GroES</fullName>
    </recommendedName>
    <alternativeName>
        <fullName evidence="1">10 kDa chaperonin</fullName>
    </alternativeName>
    <alternativeName>
        <fullName evidence="1">Chaperonin-10</fullName>
        <shortName evidence="1">Cpn10</shortName>
    </alternativeName>
</protein>
<keyword id="KW-0143">Chaperone</keyword>
<keyword id="KW-0963">Cytoplasm</keyword>
<sequence length="97" mass="10387">MNIRPLHDRVIVKRKEVETKSAGGIVLTGSAAAKSTRGEVLAVGNGRILENGEVKPLDVKVGDIVIFNDGYGVKSEKIDNEEVLIMSESDILAIVEA</sequence>
<evidence type="ECO:0000255" key="1">
    <source>
        <dbReference type="HAMAP-Rule" id="MF_00580"/>
    </source>
</evidence>
<comment type="function">
    <text evidence="1">Together with the chaperonin GroEL, plays an essential role in assisting protein folding. The GroEL-GroES system forms a nano-cage that allows encapsulation of the non-native substrate proteins and provides a physical environment optimized to promote and accelerate protein folding. GroES binds to the apical surface of the GroEL ring, thereby capping the opening of the GroEL channel.</text>
</comment>
<comment type="subunit">
    <text evidence="1">Heptamer of 7 subunits arranged in a ring. Interacts with the chaperonin GroEL.</text>
</comment>
<comment type="subcellular location">
    <subcellularLocation>
        <location evidence="1">Cytoplasm</location>
    </subcellularLocation>
</comment>
<comment type="similarity">
    <text evidence="1">Belongs to the GroES chaperonin family.</text>
</comment>
<feature type="chain" id="PRO_1000129661" description="Co-chaperonin GroES">
    <location>
        <begin position="1"/>
        <end position="97"/>
    </location>
</feature>
<reference key="1">
    <citation type="journal article" date="2009" name="PLoS Genet.">
        <title>Organised genome dynamics in the Escherichia coli species results in highly diverse adaptive paths.</title>
        <authorList>
            <person name="Touchon M."/>
            <person name="Hoede C."/>
            <person name="Tenaillon O."/>
            <person name="Barbe V."/>
            <person name="Baeriswyl S."/>
            <person name="Bidet P."/>
            <person name="Bingen E."/>
            <person name="Bonacorsi S."/>
            <person name="Bouchier C."/>
            <person name="Bouvet O."/>
            <person name="Calteau A."/>
            <person name="Chiapello H."/>
            <person name="Clermont O."/>
            <person name="Cruveiller S."/>
            <person name="Danchin A."/>
            <person name="Diard M."/>
            <person name="Dossat C."/>
            <person name="Karoui M.E."/>
            <person name="Frapy E."/>
            <person name="Garry L."/>
            <person name="Ghigo J.M."/>
            <person name="Gilles A.M."/>
            <person name="Johnson J."/>
            <person name="Le Bouguenec C."/>
            <person name="Lescat M."/>
            <person name="Mangenot S."/>
            <person name="Martinez-Jehanne V."/>
            <person name="Matic I."/>
            <person name="Nassif X."/>
            <person name="Oztas S."/>
            <person name="Petit M.A."/>
            <person name="Pichon C."/>
            <person name="Rouy Z."/>
            <person name="Ruf C.S."/>
            <person name="Schneider D."/>
            <person name="Tourret J."/>
            <person name="Vacherie B."/>
            <person name="Vallenet D."/>
            <person name="Medigue C."/>
            <person name="Rocha E.P.C."/>
            <person name="Denamur E."/>
        </authorList>
    </citation>
    <scope>NUCLEOTIDE SEQUENCE [LARGE SCALE GENOMIC DNA]</scope>
    <source>
        <strain>ATCC 35469 / DSM 13698 / BCRC 15582 / CCUG 18766 / IAM 14443 / JCM 21226 / LMG 7866 / NBRC 102419 / NCTC 12128 / CDC 0568-73</strain>
    </source>
</reference>
<name>CH10_ESCF3</name>
<organism>
    <name type="scientific">Escherichia fergusonii (strain ATCC 35469 / DSM 13698 / CCUG 18766 / IAM 14443 / JCM 21226 / LMG 7866 / NBRC 102419 / NCTC 12128 / CDC 0568-73)</name>
    <dbReference type="NCBI Taxonomy" id="585054"/>
    <lineage>
        <taxon>Bacteria</taxon>
        <taxon>Pseudomonadati</taxon>
        <taxon>Pseudomonadota</taxon>
        <taxon>Gammaproteobacteria</taxon>
        <taxon>Enterobacterales</taxon>
        <taxon>Enterobacteriaceae</taxon>
        <taxon>Escherichia</taxon>
    </lineage>
</organism>
<accession>B7LLS4</accession>